<feature type="chain" id="PRO_0000345573" description="Small ribosomal subunit protein bS18c">
    <location>
        <begin position="1"/>
        <end position="101"/>
    </location>
</feature>
<feature type="region of interest" description="Disordered" evidence="2">
    <location>
        <begin position="1"/>
        <end position="23"/>
    </location>
</feature>
<feature type="compositionally biased region" description="Basic residues" evidence="2">
    <location>
        <begin position="1"/>
        <end position="19"/>
    </location>
</feature>
<gene>
    <name evidence="1" type="primary">rps18</name>
</gene>
<reference key="1">
    <citation type="journal article" date="2007" name="Proc. Natl. Acad. Sci. U.S.A.">
        <title>Using plastid genome-scale data to resolve enigmatic relationships among basal angiosperms.</title>
        <authorList>
            <person name="Moore M.J."/>
            <person name="Bell C.D."/>
            <person name="Soltis P.S."/>
            <person name="Soltis D.E."/>
        </authorList>
    </citation>
    <scope>NUCLEOTIDE SEQUENCE [LARGE SCALE GENOMIC DNA]</scope>
</reference>
<sequence>MDKSKRPFRKSKRSFRRRLPPIGSGDRIDYRNMSLISRFISEQGKILSRRVNRLTLKQQRLITIAIKQARILSSLPFLNNEKQFERTESIPRATGPRTRNK</sequence>
<comment type="subunit">
    <text evidence="1">Part of the 30S ribosomal subunit.</text>
</comment>
<comment type="subcellular location">
    <subcellularLocation>
        <location>Plastid</location>
        <location>Chloroplast</location>
    </subcellularLocation>
</comment>
<comment type="similarity">
    <text evidence="1">Belongs to the bacterial ribosomal protein bS18 family.</text>
</comment>
<accession>A8SEC5</accession>
<geneLocation type="chloroplast"/>
<keyword id="KW-0150">Chloroplast</keyword>
<keyword id="KW-0934">Plastid</keyword>
<keyword id="KW-0687">Ribonucleoprotein</keyword>
<keyword id="KW-0689">Ribosomal protein</keyword>
<keyword id="KW-0694">RNA-binding</keyword>
<keyword id="KW-0699">rRNA-binding</keyword>
<evidence type="ECO:0000255" key="1">
    <source>
        <dbReference type="HAMAP-Rule" id="MF_00270"/>
    </source>
</evidence>
<evidence type="ECO:0000256" key="2">
    <source>
        <dbReference type="SAM" id="MobiDB-lite"/>
    </source>
</evidence>
<evidence type="ECO:0000305" key="3"/>
<dbReference type="EMBL" id="EF614270">
    <property type="protein sequence ID" value="ABQ81472.1"/>
    <property type="molecule type" value="Genomic_DNA"/>
</dbReference>
<dbReference type="RefSeq" id="YP_001542469.1">
    <property type="nucleotide sequence ID" value="NC_009962.1"/>
</dbReference>
<dbReference type="SMR" id="A8SEC5"/>
<dbReference type="GeneID" id="5729430"/>
<dbReference type="GO" id="GO:0009507">
    <property type="term" value="C:chloroplast"/>
    <property type="evidence" value="ECO:0007669"/>
    <property type="project" value="UniProtKB-SubCell"/>
</dbReference>
<dbReference type="GO" id="GO:0005763">
    <property type="term" value="C:mitochondrial small ribosomal subunit"/>
    <property type="evidence" value="ECO:0007669"/>
    <property type="project" value="TreeGrafter"/>
</dbReference>
<dbReference type="GO" id="GO:0070181">
    <property type="term" value="F:small ribosomal subunit rRNA binding"/>
    <property type="evidence" value="ECO:0007669"/>
    <property type="project" value="TreeGrafter"/>
</dbReference>
<dbReference type="GO" id="GO:0003735">
    <property type="term" value="F:structural constituent of ribosome"/>
    <property type="evidence" value="ECO:0007669"/>
    <property type="project" value="InterPro"/>
</dbReference>
<dbReference type="GO" id="GO:0006412">
    <property type="term" value="P:translation"/>
    <property type="evidence" value="ECO:0007669"/>
    <property type="project" value="UniProtKB-UniRule"/>
</dbReference>
<dbReference type="FunFam" id="4.10.640.10:FF:000002">
    <property type="entry name" value="30S ribosomal protein S18, chloroplastic"/>
    <property type="match status" value="1"/>
</dbReference>
<dbReference type="Gene3D" id="4.10.640.10">
    <property type="entry name" value="Ribosomal protein S18"/>
    <property type="match status" value="1"/>
</dbReference>
<dbReference type="HAMAP" id="MF_00270">
    <property type="entry name" value="Ribosomal_bS18"/>
    <property type="match status" value="1"/>
</dbReference>
<dbReference type="InterPro" id="IPR001648">
    <property type="entry name" value="Ribosomal_bS18"/>
</dbReference>
<dbReference type="InterPro" id="IPR018275">
    <property type="entry name" value="Ribosomal_bS18_CS"/>
</dbReference>
<dbReference type="InterPro" id="IPR036870">
    <property type="entry name" value="Ribosomal_bS18_sf"/>
</dbReference>
<dbReference type="NCBIfam" id="TIGR00165">
    <property type="entry name" value="S18"/>
    <property type="match status" value="1"/>
</dbReference>
<dbReference type="PANTHER" id="PTHR13479">
    <property type="entry name" value="30S RIBOSOMAL PROTEIN S18"/>
    <property type="match status" value="1"/>
</dbReference>
<dbReference type="PANTHER" id="PTHR13479:SF40">
    <property type="entry name" value="SMALL RIBOSOMAL SUBUNIT PROTEIN BS18M"/>
    <property type="match status" value="1"/>
</dbReference>
<dbReference type="Pfam" id="PF01084">
    <property type="entry name" value="Ribosomal_S18"/>
    <property type="match status" value="1"/>
</dbReference>
<dbReference type="PRINTS" id="PR00974">
    <property type="entry name" value="RIBOSOMALS18"/>
</dbReference>
<dbReference type="SUPFAM" id="SSF46911">
    <property type="entry name" value="Ribosomal protein S18"/>
    <property type="match status" value="1"/>
</dbReference>
<dbReference type="PROSITE" id="PS00057">
    <property type="entry name" value="RIBOSOMAL_S18"/>
    <property type="match status" value="1"/>
</dbReference>
<name>RR18_CERDE</name>
<proteinExistence type="inferred from homology"/>
<organism>
    <name type="scientific">Ceratophyllum demersum</name>
    <name type="common">Rigid hornwort</name>
    <name type="synonym">Coontail</name>
    <dbReference type="NCBI Taxonomy" id="4428"/>
    <lineage>
        <taxon>Eukaryota</taxon>
        <taxon>Viridiplantae</taxon>
        <taxon>Streptophyta</taxon>
        <taxon>Embryophyta</taxon>
        <taxon>Tracheophyta</taxon>
        <taxon>Spermatophyta</taxon>
        <taxon>Magnoliopsida</taxon>
        <taxon>Ceratophyllales</taxon>
        <taxon>Ceratophyllaceae</taxon>
        <taxon>Ceratophyllum</taxon>
    </lineage>
</organism>
<protein>
    <recommendedName>
        <fullName evidence="1">Small ribosomal subunit protein bS18c</fullName>
    </recommendedName>
    <alternativeName>
        <fullName evidence="3">30S ribosomal protein S18, chloroplastic</fullName>
    </alternativeName>
</protein>